<evidence type="ECO:0000255" key="1">
    <source>
        <dbReference type="PROSITE-ProRule" id="PRU00434"/>
    </source>
</evidence>
<evidence type="ECO:0000269" key="2">
    <source>
    </source>
</evidence>
<evidence type="ECO:0000305" key="3"/>
<reference key="1">
    <citation type="journal article" date="2002" name="Nature">
        <title>The genome sequence of Schizosaccharomyces pombe.</title>
        <authorList>
            <person name="Wood V."/>
            <person name="Gwilliam R."/>
            <person name="Rajandream M.A."/>
            <person name="Lyne M.H."/>
            <person name="Lyne R."/>
            <person name="Stewart A."/>
            <person name="Sgouros J.G."/>
            <person name="Peat N."/>
            <person name="Hayles J."/>
            <person name="Baker S.G."/>
            <person name="Basham D."/>
            <person name="Bowman S."/>
            <person name="Brooks K."/>
            <person name="Brown D."/>
            <person name="Brown S."/>
            <person name="Chillingworth T."/>
            <person name="Churcher C.M."/>
            <person name="Collins M."/>
            <person name="Connor R."/>
            <person name="Cronin A."/>
            <person name="Davis P."/>
            <person name="Feltwell T."/>
            <person name="Fraser A."/>
            <person name="Gentles S."/>
            <person name="Goble A."/>
            <person name="Hamlin N."/>
            <person name="Harris D.E."/>
            <person name="Hidalgo J."/>
            <person name="Hodgson G."/>
            <person name="Holroyd S."/>
            <person name="Hornsby T."/>
            <person name="Howarth S."/>
            <person name="Huckle E.J."/>
            <person name="Hunt S."/>
            <person name="Jagels K."/>
            <person name="James K.D."/>
            <person name="Jones L."/>
            <person name="Jones M."/>
            <person name="Leather S."/>
            <person name="McDonald S."/>
            <person name="McLean J."/>
            <person name="Mooney P."/>
            <person name="Moule S."/>
            <person name="Mungall K.L."/>
            <person name="Murphy L.D."/>
            <person name="Niblett D."/>
            <person name="Odell C."/>
            <person name="Oliver K."/>
            <person name="O'Neil S."/>
            <person name="Pearson D."/>
            <person name="Quail M.A."/>
            <person name="Rabbinowitsch E."/>
            <person name="Rutherford K.M."/>
            <person name="Rutter S."/>
            <person name="Saunders D."/>
            <person name="Seeger K."/>
            <person name="Sharp S."/>
            <person name="Skelton J."/>
            <person name="Simmonds M.N."/>
            <person name="Squares R."/>
            <person name="Squares S."/>
            <person name="Stevens K."/>
            <person name="Taylor K."/>
            <person name="Taylor R.G."/>
            <person name="Tivey A."/>
            <person name="Walsh S.V."/>
            <person name="Warren T."/>
            <person name="Whitehead S."/>
            <person name="Woodward J.R."/>
            <person name="Volckaert G."/>
            <person name="Aert R."/>
            <person name="Robben J."/>
            <person name="Grymonprez B."/>
            <person name="Weltjens I."/>
            <person name="Vanstreels E."/>
            <person name="Rieger M."/>
            <person name="Schaefer M."/>
            <person name="Mueller-Auer S."/>
            <person name="Gabel C."/>
            <person name="Fuchs M."/>
            <person name="Duesterhoeft A."/>
            <person name="Fritzc C."/>
            <person name="Holzer E."/>
            <person name="Moestl D."/>
            <person name="Hilbert H."/>
            <person name="Borzym K."/>
            <person name="Langer I."/>
            <person name="Beck A."/>
            <person name="Lehrach H."/>
            <person name="Reinhardt R."/>
            <person name="Pohl T.M."/>
            <person name="Eger P."/>
            <person name="Zimmermann W."/>
            <person name="Wedler H."/>
            <person name="Wambutt R."/>
            <person name="Purnelle B."/>
            <person name="Goffeau A."/>
            <person name="Cadieu E."/>
            <person name="Dreano S."/>
            <person name="Gloux S."/>
            <person name="Lelaure V."/>
            <person name="Mottier S."/>
            <person name="Galibert F."/>
            <person name="Aves S.J."/>
            <person name="Xiang Z."/>
            <person name="Hunt C."/>
            <person name="Moore K."/>
            <person name="Hurst S.M."/>
            <person name="Lucas M."/>
            <person name="Rochet M."/>
            <person name="Gaillardin C."/>
            <person name="Tallada V.A."/>
            <person name="Garzon A."/>
            <person name="Thode G."/>
            <person name="Daga R.R."/>
            <person name="Cruzado L."/>
            <person name="Jimenez J."/>
            <person name="Sanchez M."/>
            <person name="del Rey F."/>
            <person name="Benito J."/>
            <person name="Dominguez A."/>
            <person name="Revuelta J.L."/>
            <person name="Moreno S."/>
            <person name="Armstrong J."/>
            <person name="Forsburg S.L."/>
            <person name="Cerutti L."/>
            <person name="Lowe T."/>
            <person name="McCombie W.R."/>
            <person name="Paulsen I."/>
            <person name="Potashkin J."/>
            <person name="Shpakovski G.V."/>
            <person name="Ussery D."/>
            <person name="Barrell B.G."/>
            <person name="Nurse P."/>
        </authorList>
    </citation>
    <scope>NUCLEOTIDE SEQUENCE [LARGE SCALE GENOMIC DNA]</scope>
    <source>
        <strain>972 / ATCC 24843</strain>
    </source>
</reference>
<reference key="2">
    <citation type="journal article" date="2006" name="Nat. Biotechnol.">
        <title>ORFeome cloning and global analysis of protein localization in the fission yeast Schizosaccharomyces pombe.</title>
        <authorList>
            <person name="Matsuyama A."/>
            <person name="Arai R."/>
            <person name="Yashiroda Y."/>
            <person name="Shirai A."/>
            <person name="Kamata A."/>
            <person name="Sekido S."/>
            <person name="Kobayashi Y."/>
            <person name="Hashimoto A."/>
            <person name="Hamamoto M."/>
            <person name="Hiraoka Y."/>
            <person name="Horinouchi S."/>
            <person name="Yoshida M."/>
        </authorList>
    </citation>
    <scope>SUBCELLULAR LOCATION [LARGE SCALE ANALYSIS]</scope>
</reference>
<protein>
    <recommendedName>
        <fullName>Uncharacterized ABC transporter ATP-binding protein C323.04</fullName>
    </recommendedName>
</protein>
<dbReference type="EMBL" id="CU329670">
    <property type="protein sequence ID" value="CAB53407.1"/>
    <property type="molecule type" value="Genomic_DNA"/>
</dbReference>
<dbReference type="PIR" id="T38641">
    <property type="entry name" value="T38641"/>
</dbReference>
<dbReference type="RefSeq" id="NP_594374.1">
    <property type="nucleotide sequence ID" value="NM_001019795.2"/>
</dbReference>
<dbReference type="SMR" id="Q9UT95"/>
<dbReference type="BioGRID" id="279632">
    <property type="interactions" value="2"/>
</dbReference>
<dbReference type="FunCoup" id="Q9UT95">
    <property type="interactions" value="92"/>
</dbReference>
<dbReference type="STRING" id="284812.Q9UT95"/>
<dbReference type="iPTMnet" id="Q9UT95"/>
<dbReference type="PaxDb" id="4896-SPAC323.04.1"/>
<dbReference type="EnsemblFungi" id="SPAC323.04.1">
    <property type="protein sequence ID" value="SPAC323.04.1:pep"/>
    <property type="gene ID" value="SPAC323.04"/>
</dbReference>
<dbReference type="KEGG" id="spo:2543203"/>
<dbReference type="PomBase" id="SPAC323.04"/>
<dbReference type="VEuPathDB" id="FungiDB:SPAC323.04"/>
<dbReference type="eggNOG" id="KOG0927">
    <property type="taxonomic scope" value="Eukaryota"/>
</dbReference>
<dbReference type="HOGENOM" id="CLU_000604_45_3_1"/>
<dbReference type="InParanoid" id="Q9UT95"/>
<dbReference type="OMA" id="WEIKKHI"/>
<dbReference type="PhylomeDB" id="Q9UT95"/>
<dbReference type="PRO" id="PR:Q9UT95"/>
<dbReference type="Proteomes" id="UP000002485">
    <property type="component" value="Chromosome I"/>
</dbReference>
<dbReference type="GO" id="GO:0005739">
    <property type="term" value="C:mitochondrion"/>
    <property type="evidence" value="ECO:0007005"/>
    <property type="project" value="PomBase"/>
</dbReference>
<dbReference type="GO" id="GO:0005524">
    <property type="term" value="F:ATP binding"/>
    <property type="evidence" value="ECO:0007669"/>
    <property type="project" value="UniProtKB-KW"/>
</dbReference>
<dbReference type="GO" id="GO:0016887">
    <property type="term" value="F:ATP hydrolysis activity"/>
    <property type="evidence" value="ECO:0000255"/>
    <property type="project" value="PomBase"/>
</dbReference>
<dbReference type="Gene3D" id="3.40.50.300">
    <property type="entry name" value="P-loop containing nucleotide triphosphate hydrolases"/>
    <property type="match status" value="2"/>
</dbReference>
<dbReference type="InterPro" id="IPR003593">
    <property type="entry name" value="AAA+_ATPase"/>
</dbReference>
<dbReference type="InterPro" id="IPR003439">
    <property type="entry name" value="ABC_transporter-like_ATP-bd"/>
</dbReference>
<dbReference type="InterPro" id="IPR050334">
    <property type="entry name" value="Molybdenum_import_ModC"/>
</dbReference>
<dbReference type="InterPro" id="IPR027417">
    <property type="entry name" value="P-loop_NTPase"/>
</dbReference>
<dbReference type="PANTHER" id="PTHR43514">
    <property type="entry name" value="ABC TRANSPORTER I FAMILY MEMBER 10"/>
    <property type="match status" value="1"/>
</dbReference>
<dbReference type="PANTHER" id="PTHR43514:SF4">
    <property type="entry name" value="ABC TRANSPORTER I FAMILY MEMBER 10"/>
    <property type="match status" value="1"/>
</dbReference>
<dbReference type="Pfam" id="PF00005">
    <property type="entry name" value="ABC_tran"/>
    <property type="match status" value="2"/>
</dbReference>
<dbReference type="SMART" id="SM00382">
    <property type="entry name" value="AAA"/>
    <property type="match status" value="2"/>
</dbReference>
<dbReference type="SUPFAM" id="SSF52540">
    <property type="entry name" value="P-loop containing nucleoside triphosphate hydrolases"/>
    <property type="match status" value="2"/>
</dbReference>
<dbReference type="PROSITE" id="PS50893">
    <property type="entry name" value="ABC_TRANSPORTER_2"/>
    <property type="match status" value="2"/>
</dbReference>
<comment type="subcellular location">
    <subcellularLocation>
        <location evidence="2">Mitochondrion</location>
    </subcellularLocation>
</comment>
<comment type="similarity">
    <text evidence="3">Belongs to the ABC transporter superfamily.</text>
</comment>
<feature type="chain" id="PRO_0000310288" description="Uncharacterized ABC transporter ATP-binding protein C323.04">
    <location>
        <begin position="1"/>
        <end position="487"/>
    </location>
</feature>
<feature type="domain" description="ABC transporter 1" evidence="1">
    <location>
        <begin position="5"/>
        <end position="249"/>
    </location>
</feature>
<feature type="domain" description="ABC transporter 2" evidence="1">
    <location>
        <begin position="265"/>
        <end position="487"/>
    </location>
</feature>
<feature type="binding site" evidence="1">
    <location>
        <begin position="297"/>
        <end position="304"/>
    </location>
    <ligand>
        <name>ATP</name>
        <dbReference type="ChEBI" id="CHEBI:30616"/>
    </ligand>
</feature>
<organism>
    <name type="scientific">Schizosaccharomyces pombe (strain 972 / ATCC 24843)</name>
    <name type="common">Fission yeast</name>
    <dbReference type="NCBI Taxonomy" id="284812"/>
    <lineage>
        <taxon>Eukaryota</taxon>
        <taxon>Fungi</taxon>
        <taxon>Dikarya</taxon>
        <taxon>Ascomycota</taxon>
        <taxon>Taphrinomycotina</taxon>
        <taxon>Schizosaccharomycetes</taxon>
        <taxon>Schizosaccharomycetales</taxon>
        <taxon>Schizosaccharomycetaceae</taxon>
        <taxon>Schizosaccharomyces</taxon>
    </lineage>
</organism>
<keyword id="KW-0067">ATP-binding</keyword>
<keyword id="KW-0496">Mitochondrion</keyword>
<keyword id="KW-0547">Nucleotide-binding</keyword>
<keyword id="KW-1185">Reference proteome</keyword>
<keyword id="KW-0677">Repeat</keyword>
<proteinExistence type="inferred from homology"/>
<accession>Q9UT95</accession>
<sequence length="487" mass="54842">MASFVKFANTTFLDARFPLFKNVSFELARKQNWAIIGNTGSGRTTFLRCIQGSFTPSPSTSFSYPFLKGKSDSPWQAIQLLDFKSSGQQRAAYYSERYHSFRDKEHDTTLEKWLLGAYRGNEKFASQHVQEAASMTQLSHLLPSSLINLSNGQSRRAMLASKLVQRPQLLLLDEPYAGLDVTSRSVLSSLLGEMSNHCSPKIVLSLRPQDKIPDFITHVLELKNKKITYQGPKEQYIPMTSHSTNIPVKPQMKKSKPITIGKPLISMEHLNCVYWGRKVLSDINWTIREGERWALTGSNGSGKTTLLAYVVGDHPKLFASNIKFFGKSIGPGTGISIFDIQENIGHCSPEIHNHFPKQHTCFEALLSAWSTTFTIPKLTETRLAAISSILEEFELKDIKDKPLSSISVGMQRFILFCRAIVKQPRLVVLDEPFQGVDTKYVHMAHNYLNEKLSPSQAMVIISHYEDELPACVNRRAHIDNGKLVIHA</sequence>
<gene>
    <name type="ORF">SPAC323.04</name>
</gene>
<name>YL44_SCHPO</name>